<proteinExistence type="evidence at protein level"/>
<evidence type="ECO:0000255" key="1"/>
<evidence type="ECO:0000255" key="2">
    <source>
        <dbReference type="PROSITE-ProRule" id="PRU00434"/>
    </source>
</evidence>
<evidence type="ECO:0000255" key="3">
    <source>
        <dbReference type="PROSITE-ProRule" id="PRU00441"/>
    </source>
</evidence>
<evidence type="ECO:0000269" key="4">
    <source>
    </source>
</evidence>
<evidence type="ECO:0000269" key="5">
    <source>
    </source>
</evidence>
<evidence type="ECO:0000269" key="6">
    <source>
    </source>
</evidence>
<evidence type="ECO:0000269" key="7">
    <source>
    </source>
</evidence>
<evidence type="ECO:0000305" key="8"/>
<name>MDL1_YEAST</name>
<gene>
    <name type="primary">MDL1</name>
    <name type="ordered locus">YLR188W</name>
    <name type="ORF">L9470.3</name>
</gene>
<comment type="function">
    <text evidence="4">Mediates export of peptides with molecular masses of 2100 to 600 daltons generated upon proteolysis of mitochondrial inner membrane proteins.</text>
</comment>
<comment type="subcellular location">
    <subcellularLocation>
        <location evidence="4 5 7">Mitochondrion inner membrane</location>
        <topology evidence="3 4 5 7">Multi-pass membrane protein</topology>
    </subcellularLocation>
</comment>
<comment type="miscellaneous">
    <text evidence="6">Present with 1040 molecules/cell in log phase SD medium.</text>
</comment>
<comment type="similarity">
    <text evidence="8">Belongs to the ABC transporter superfamily. ABCB family. Mitochondrial peptide exporter (TC 3.A.1.212) subfamily.</text>
</comment>
<comment type="sequence caution" evidence="8">
    <conflict type="frameshift">
        <sequence resource="EMBL-CDS" id="AAA20681"/>
    </conflict>
</comment>
<accession>P33310</accession>
<accession>D6VYJ1</accession>
<sequence>MIVRMIRLCKGPKLLRSQFASASALYSTKSLFKPPMYQKAEINLIIPHRKHFLLRSIRLQSDIAQGKKSTKPTLKLSNANSKSSGFKDIKRLFVLSKPESKYIGLALLLILISSSVSMAVPSVIGKLLDLASESDGEDEEGSKSNKLYGFTKKQFFTALGAVFIIGAVANASRIIILKVTGERLVARLRTRTMKAALDQDATFLDTNRVGDLISRLSSDASIVAKSVTQNVSDGTRAIIQGFVGFGMMSFLSWKLTCVMMILAPPLGAMALIYGRKIRNLSRQLQTSVGGLTKVAEEQLNATRTIQAYGGEKNEVRRYAKEVRNVFHIGLKEAVTSGLFFGSTGLVGNTAMLSLLLVGTSMIQSGSMTVGELSSFMMYAVYTGSSLFGLSSFYSELMKGAGAAARVFELNDRKPLIRPTIGKDPVSLAQKPIVFKNVSFTYPTRPKHQIFKDLNITIKPGEHVCAVGPSGSGKSTIASLLLRYYDVNSGSIEFGDEDIRNFNLRKYRRLIGYVQQEPLLFNGTILDNILYCIPPEIAEQDDRIRRAIGKANCTKFLANFPDGLQTMVGARGAQLSGGQKQRIALARAFLLDPAVLILDEATSALDSQSEEIVAKNLQRRVERGFTTISIAHRLSTIKHSTRVIVLGKHGSVVETGSFRDLIAIPNSELNALLAEQQDEEGKGGVIDLDNSVAREV</sequence>
<keyword id="KW-0067">ATP-binding</keyword>
<keyword id="KW-0472">Membrane</keyword>
<keyword id="KW-0496">Mitochondrion</keyword>
<keyword id="KW-0999">Mitochondrion inner membrane</keyword>
<keyword id="KW-0547">Nucleotide-binding</keyword>
<keyword id="KW-1185">Reference proteome</keyword>
<keyword id="KW-0809">Transit peptide</keyword>
<keyword id="KW-0812">Transmembrane</keyword>
<keyword id="KW-1133">Transmembrane helix</keyword>
<keyword id="KW-0813">Transport</keyword>
<dbReference type="EMBL" id="L16958">
    <property type="protein sequence ID" value="AAA20681.1"/>
    <property type="status" value="ALT_FRAME"/>
    <property type="molecule type" value="Genomic_DNA"/>
</dbReference>
<dbReference type="EMBL" id="U17246">
    <property type="protein sequence ID" value="AAB67455.1"/>
    <property type="molecule type" value="Genomic_DNA"/>
</dbReference>
<dbReference type="EMBL" id="BK006945">
    <property type="protein sequence ID" value="DAA09507.1"/>
    <property type="molecule type" value="Genomic_DNA"/>
</dbReference>
<dbReference type="PIR" id="S51433">
    <property type="entry name" value="S51433"/>
</dbReference>
<dbReference type="RefSeq" id="NP_013289.1">
    <property type="nucleotide sequence ID" value="NM_001182075.1"/>
</dbReference>
<dbReference type="SMR" id="P33310"/>
<dbReference type="BioGRID" id="31458">
    <property type="interactions" value="139"/>
</dbReference>
<dbReference type="FunCoup" id="P33310">
    <property type="interactions" value="547"/>
</dbReference>
<dbReference type="STRING" id="4932.YLR188W"/>
<dbReference type="TCDB" id="3.A.1.212.1">
    <property type="family name" value="the atp-binding cassette (abc) superfamily"/>
</dbReference>
<dbReference type="iPTMnet" id="P33310"/>
<dbReference type="PaxDb" id="4932-YLR188W"/>
<dbReference type="PeptideAtlas" id="P33310"/>
<dbReference type="EnsemblFungi" id="YLR188W_mRNA">
    <property type="protein sequence ID" value="YLR188W"/>
    <property type="gene ID" value="YLR188W"/>
</dbReference>
<dbReference type="GeneID" id="850885"/>
<dbReference type="KEGG" id="sce:YLR188W"/>
<dbReference type="AGR" id="SGD:S000004178"/>
<dbReference type="SGD" id="S000004178">
    <property type="gene designation" value="MDL1"/>
</dbReference>
<dbReference type="VEuPathDB" id="FungiDB:YLR188W"/>
<dbReference type="eggNOG" id="KOG0058">
    <property type="taxonomic scope" value="Eukaryota"/>
</dbReference>
<dbReference type="GeneTree" id="ENSGT00940000176745"/>
<dbReference type="HOGENOM" id="CLU_000604_84_3_1"/>
<dbReference type="InParanoid" id="P33310"/>
<dbReference type="OMA" id="MTWLGER"/>
<dbReference type="OrthoDB" id="6500128at2759"/>
<dbReference type="BioCyc" id="YEAST:G3O-32311-MONOMER"/>
<dbReference type="BioGRID-ORCS" id="850885">
    <property type="hits" value="0 hits in 10 CRISPR screens"/>
</dbReference>
<dbReference type="PRO" id="PR:P33310"/>
<dbReference type="Proteomes" id="UP000002311">
    <property type="component" value="Chromosome XII"/>
</dbReference>
<dbReference type="RNAct" id="P33310">
    <property type="molecule type" value="protein"/>
</dbReference>
<dbReference type="GO" id="GO:0005743">
    <property type="term" value="C:mitochondrial inner membrane"/>
    <property type="evidence" value="ECO:0000314"/>
    <property type="project" value="SGD"/>
</dbReference>
<dbReference type="GO" id="GO:0005739">
    <property type="term" value="C:mitochondrion"/>
    <property type="evidence" value="ECO:0007005"/>
    <property type="project" value="SGD"/>
</dbReference>
<dbReference type="GO" id="GO:0015421">
    <property type="term" value="F:ABC-type oligopeptide transporter activity"/>
    <property type="evidence" value="ECO:0000315"/>
    <property type="project" value="SGD"/>
</dbReference>
<dbReference type="GO" id="GO:0005524">
    <property type="term" value="F:ATP binding"/>
    <property type="evidence" value="ECO:0007669"/>
    <property type="project" value="UniProtKB-KW"/>
</dbReference>
<dbReference type="GO" id="GO:0016887">
    <property type="term" value="F:ATP hydrolysis activity"/>
    <property type="evidence" value="ECO:0000314"/>
    <property type="project" value="SGD"/>
</dbReference>
<dbReference type="GO" id="GO:0090374">
    <property type="term" value="P:oligopeptide export from mitochondrion"/>
    <property type="evidence" value="ECO:0000315"/>
    <property type="project" value="SGD"/>
</dbReference>
<dbReference type="CDD" id="cd18573">
    <property type="entry name" value="ABC_6TM_ABCB10_like"/>
    <property type="match status" value="1"/>
</dbReference>
<dbReference type="CDD" id="cd03249">
    <property type="entry name" value="ABC_MTABC3_MDL1_MDL2"/>
    <property type="match status" value="1"/>
</dbReference>
<dbReference type="FunFam" id="1.20.1560.10:FF:000091">
    <property type="entry name" value="ATP-dependent permease MDL2"/>
    <property type="match status" value="1"/>
</dbReference>
<dbReference type="FunFam" id="3.40.50.300:FF:000218">
    <property type="entry name" value="Multidrug ABC transporter ATP-binding protein"/>
    <property type="match status" value="1"/>
</dbReference>
<dbReference type="Gene3D" id="1.20.1560.10">
    <property type="entry name" value="ABC transporter type 1, transmembrane domain"/>
    <property type="match status" value="1"/>
</dbReference>
<dbReference type="Gene3D" id="3.40.50.300">
    <property type="entry name" value="P-loop containing nucleotide triphosphate hydrolases"/>
    <property type="match status" value="1"/>
</dbReference>
<dbReference type="InterPro" id="IPR003593">
    <property type="entry name" value="AAA+_ATPase"/>
</dbReference>
<dbReference type="InterPro" id="IPR011527">
    <property type="entry name" value="ABC1_TM_dom"/>
</dbReference>
<dbReference type="InterPro" id="IPR036640">
    <property type="entry name" value="ABC1_TM_sf"/>
</dbReference>
<dbReference type="InterPro" id="IPR003439">
    <property type="entry name" value="ABC_transporter-like_ATP-bd"/>
</dbReference>
<dbReference type="InterPro" id="IPR017871">
    <property type="entry name" value="ABC_transporter-like_CS"/>
</dbReference>
<dbReference type="InterPro" id="IPR027417">
    <property type="entry name" value="P-loop_NTPase"/>
</dbReference>
<dbReference type="InterPro" id="IPR039421">
    <property type="entry name" value="Type_1_exporter"/>
</dbReference>
<dbReference type="PANTHER" id="PTHR43394:SF1">
    <property type="entry name" value="ATP-BINDING CASSETTE SUB-FAMILY B MEMBER 10, MITOCHONDRIAL"/>
    <property type="match status" value="1"/>
</dbReference>
<dbReference type="PANTHER" id="PTHR43394">
    <property type="entry name" value="ATP-DEPENDENT PERMEASE MDL1, MITOCHONDRIAL"/>
    <property type="match status" value="1"/>
</dbReference>
<dbReference type="Pfam" id="PF00664">
    <property type="entry name" value="ABC_membrane"/>
    <property type="match status" value="1"/>
</dbReference>
<dbReference type="Pfam" id="PF00005">
    <property type="entry name" value="ABC_tran"/>
    <property type="match status" value="1"/>
</dbReference>
<dbReference type="SMART" id="SM00382">
    <property type="entry name" value="AAA"/>
    <property type="match status" value="1"/>
</dbReference>
<dbReference type="SUPFAM" id="SSF90123">
    <property type="entry name" value="ABC transporter transmembrane region"/>
    <property type="match status" value="1"/>
</dbReference>
<dbReference type="SUPFAM" id="SSF52540">
    <property type="entry name" value="P-loop containing nucleoside triphosphate hydrolases"/>
    <property type="match status" value="1"/>
</dbReference>
<dbReference type="PROSITE" id="PS50929">
    <property type="entry name" value="ABC_TM1F"/>
    <property type="match status" value="1"/>
</dbReference>
<dbReference type="PROSITE" id="PS00211">
    <property type="entry name" value="ABC_TRANSPORTER_1"/>
    <property type="match status" value="1"/>
</dbReference>
<dbReference type="PROSITE" id="PS50893">
    <property type="entry name" value="ABC_TRANSPORTER_2"/>
    <property type="match status" value="1"/>
</dbReference>
<feature type="transit peptide" description="Mitochondrion" evidence="1">
    <location>
        <begin position="1"/>
        <end position="100"/>
    </location>
</feature>
<feature type="chain" id="PRO_0000045330" description="ATP-dependent permease MDL1, mitochondrial">
    <location>
        <begin position="101"/>
        <end position="695"/>
    </location>
</feature>
<feature type="transmembrane region" description="Helical" evidence="3">
    <location>
        <begin position="103"/>
        <end position="123"/>
    </location>
</feature>
<feature type="transmembrane region" description="Helical" evidence="3">
    <location>
        <begin position="156"/>
        <end position="176"/>
    </location>
</feature>
<feature type="transmembrane region" description="Helical" evidence="3">
    <location>
        <begin position="242"/>
        <end position="262"/>
    </location>
</feature>
<feature type="transmembrane region" description="Helical" evidence="3">
    <location>
        <begin position="337"/>
        <end position="357"/>
    </location>
</feature>
<feature type="transmembrane region" description="Helical" evidence="3">
    <location>
        <begin position="372"/>
        <end position="392"/>
    </location>
</feature>
<feature type="domain" description="ABC transmembrane type-1" evidence="3">
    <location>
        <begin position="103"/>
        <end position="398"/>
    </location>
</feature>
<feature type="domain" description="ABC transporter" evidence="2">
    <location>
        <begin position="432"/>
        <end position="673"/>
    </location>
</feature>
<feature type="binding site" evidence="2">
    <location>
        <begin position="467"/>
        <end position="474"/>
    </location>
    <ligand>
        <name>ATP</name>
        <dbReference type="ChEBI" id="CHEBI:30616"/>
    </ligand>
</feature>
<feature type="mutagenesis site" description="Decreased release of long peptides from mitochondria." evidence="4">
    <original>G</original>
    <variation>V</variation>
    <location>
        <position position="467"/>
    </location>
</feature>
<feature type="mutagenesis site" description="Decreased release of long peptides from mitochondria." evidence="4">
    <original>S</original>
    <variation>N</variation>
    <location>
        <position position="575"/>
    </location>
</feature>
<feature type="mutagenesis site" description="Decreased release of long peptides from mitochondria." evidence="4">
    <original>D</original>
    <variation>A</variation>
    <location>
        <position position="598"/>
    </location>
</feature>
<feature type="sequence conflict" description="In Ref. 1; AAA20681." evidence="8" ref="1">
    <original>A</original>
    <variation>G</variation>
    <location>
        <position position="22"/>
    </location>
</feature>
<feature type="sequence conflict" description="In Ref. 1; AAA20681." evidence="8" ref="1">
    <original>F</original>
    <variation>L</variation>
    <location>
        <position position="150"/>
    </location>
</feature>
<feature type="sequence conflict" description="In Ref. 1; AAA20681." evidence="8" ref="1">
    <original>GA</original>
    <variation>WP</variation>
    <location>
        <begin position="267"/>
        <end position="268"/>
    </location>
</feature>
<feature type="sequence conflict" description="In Ref. 1; AAA20681." evidence="8" ref="1">
    <original>NE</original>
    <variation>KQ</variation>
    <location>
        <begin position="313"/>
        <end position="314"/>
    </location>
</feature>
<reference key="1">
    <citation type="journal article" date="1994" name="Yeast">
        <title>Mapping and sequencing of two yeast genes belonging to the ATP-binding cassette superfamily.</title>
        <authorList>
            <person name="Dean M.C."/>
            <person name="Allikmets R."/>
            <person name="Gerrard B.C."/>
            <person name="Stewart C."/>
            <person name="Kistler A."/>
            <person name="Shafer B."/>
            <person name="Michaelis S."/>
            <person name="Strathern J."/>
        </authorList>
    </citation>
    <scope>NUCLEOTIDE SEQUENCE [GENOMIC DNA]</scope>
    <source>
        <strain>ATCC 204508 / S288c</strain>
    </source>
</reference>
<reference key="2">
    <citation type="journal article" date="1997" name="Nature">
        <title>The nucleotide sequence of Saccharomyces cerevisiae chromosome XII.</title>
        <authorList>
            <person name="Johnston M."/>
            <person name="Hillier L.W."/>
            <person name="Riles L."/>
            <person name="Albermann K."/>
            <person name="Andre B."/>
            <person name="Ansorge W."/>
            <person name="Benes V."/>
            <person name="Brueckner M."/>
            <person name="Delius H."/>
            <person name="Dubois E."/>
            <person name="Duesterhoeft A."/>
            <person name="Entian K.-D."/>
            <person name="Floeth M."/>
            <person name="Goffeau A."/>
            <person name="Hebling U."/>
            <person name="Heumann K."/>
            <person name="Heuss-Neitzel D."/>
            <person name="Hilbert H."/>
            <person name="Hilger F."/>
            <person name="Kleine K."/>
            <person name="Koetter P."/>
            <person name="Louis E.J."/>
            <person name="Messenguy F."/>
            <person name="Mewes H.-W."/>
            <person name="Miosga T."/>
            <person name="Moestl D."/>
            <person name="Mueller-Auer S."/>
            <person name="Nentwich U."/>
            <person name="Obermaier B."/>
            <person name="Piravandi E."/>
            <person name="Pohl T.M."/>
            <person name="Portetelle D."/>
            <person name="Purnelle B."/>
            <person name="Rechmann S."/>
            <person name="Rieger M."/>
            <person name="Rinke M."/>
            <person name="Rose M."/>
            <person name="Scharfe M."/>
            <person name="Scherens B."/>
            <person name="Scholler P."/>
            <person name="Schwager C."/>
            <person name="Schwarz S."/>
            <person name="Underwood A.P."/>
            <person name="Urrestarazu L.A."/>
            <person name="Vandenbol M."/>
            <person name="Verhasselt P."/>
            <person name="Vierendeels F."/>
            <person name="Voet M."/>
            <person name="Volckaert G."/>
            <person name="Voss H."/>
            <person name="Wambutt R."/>
            <person name="Wedler E."/>
            <person name="Wedler H."/>
            <person name="Zimmermann F.K."/>
            <person name="Zollner A."/>
            <person name="Hani J."/>
            <person name="Hoheisel J.D."/>
        </authorList>
    </citation>
    <scope>NUCLEOTIDE SEQUENCE [LARGE SCALE GENOMIC DNA]</scope>
    <source>
        <strain>ATCC 204508 / S288c</strain>
    </source>
</reference>
<reference key="3">
    <citation type="journal article" date="2014" name="G3 (Bethesda)">
        <title>The reference genome sequence of Saccharomyces cerevisiae: Then and now.</title>
        <authorList>
            <person name="Engel S.R."/>
            <person name="Dietrich F.S."/>
            <person name="Fisk D.G."/>
            <person name="Binkley G."/>
            <person name="Balakrishnan R."/>
            <person name="Costanzo M.C."/>
            <person name="Dwight S.S."/>
            <person name="Hitz B.C."/>
            <person name="Karra K."/>
            <person name="Nash R.S."/>
            <person name="Weng S."/>
            <person name="Wong E.D."/>
            <person name="Lloyd P."/>
            <person name="Skrzypek M.S."/>
            <person name="Miyasato S.R."/>
            <person name="Simison M."/>
            <person name="Cherry J.M."/>
        </authorList>
    </citation>
    <scope>GENOME REANNOTATION</scope>
    <source>
        <strain>ATCC 204508 / S288c</strain>
    </source>
</reference>
<reference key="4">
    <citation type="journal article" date="2001" name="Science">
        <title>Role of the ABC transporter Mdl1 in peptide export from mitochondria.</title>
        <authorList>
            <person name="Young L."/>
            <person name="Leonhard K."/>
            <person name="Tatsuta T."/>
            <person name="Trowsdale J."/>
            <person name="Langer T."/>
        </authorList>
    </citation>
    <scope>FUNCTION</scope>
    <scope>SUBCELLULAR LOCATION</scope>
    <scope>MUTAGENESIS OF GLY-467; SER-575 AND ASP-598</scope>
</reference>
<reference key="5">
    <citation type="journal article" date="2003" name="Nature">
        <title>Global analysis of protein localization in budding yeast.</title>
        <authorList>
            <person name="Huh W.-K."/>
            <person name="Falvo J.V."/>
            <person name="Gerke L.C."/>
            <person name="Carroll A.S."/>
            <person name="Howson R.W."/>
            <person name="Weissman J.S."/>
            <person name="O'Shea E.K."/>
        </authorList>
    </citation>
    <scope>SUBCELLULAR LOCATION [LARGE SCALE ANALYSIS]</scope>
</reference>
<reference key="6">
    <citation type="journal article" date="2003" name="Nature">
        <title>Global analysis of protein expression in yeast.</title>
        <authorList>
            <person name="Ghaemmaghami S."/>
            <person name="Huh W.-K."/>
            <person name="Bower K."/>
            <person name="Howson R.W."/>
            <person name="Belle A."/>
            <person name="Dephoure N."/>
            <person name="O'Shea E.K."/>
            <person name="Weissman J.S."/>
        </authorList>
    </citation>
    <scope>LEVEL OF PROTEIN EXPRESSION [LARGE SCALE ANALYSIS]</scope>
</reference>
<reference key="7">
    <citation type="journal article" date="2003" name="Proc. Natl. Acad. Sci. U.S.A.">
        <title>The proteome of Saccharomyces cerevisiae mitochondria.</title>
        <authorList>
            <person name="Sickmann A."/>
            <person name="Reinders J."/>
            <person name="Wagner Y."/>
            <person name="Joppich C."/>
            <person name="Zahedi R.P."/>
            <person name="Meyer H.E."/>
            <person name="Schoenfisch B."/>
            <person name="Perschil I."/>
            <person name="Chacinska A."/>
            <person name="Guiard B."/>
            <person name="Rehling P."/>
            <person name="Pfanner N."/>
            <person name="Meisinger C."/>
        </authorList>
    </citation>
    <scope>SUBCELLULAR LOCATION [LARGE SCALE ANALYSIS]</scope>
    <source>
        <strain>ATCC 76625 / YPH499</strain>
    </source>
</reference>
<organism>
    <name type="scientific">Saccharomyces cerevisiae (strain ATCC 204508 / S288c)</name>
    <name type="common">Baker's yeast</name>
    <dbReference type="NCBI Taxonomy" id="559292"/>
    <lineage>
        <taxon>Eukaryota</taxon>
        <taxon>Fungi</taxon>
        <taxon>Dikarya</taxon>
        <taxon>Ascomycota</taxon>
        <taxon>Saccharomycotina</taxon>
        <taxon>Saccharomycetes</taxon>
        <taxon>Saccharomycetales</taxon>
        <taxon>Saccharomycetaceae</taxon>
        <taxon>Saccharomyces</taxon>
    </lineage>
</organism>
<protein>
    <recommendedName>
        <fullName>ATP-dependent permease MDL1, mitochondrial</fullName>
    </recommendedName>
    <alternativeName>
        <fullName>ABC transporter MDL1</fullName>
    </alternativeName>
    <alternativeName>
        <fullName>Multidrug resistance-like protein 1</fullName>
    </alternativeName>
</protein>